<sequence>MFCNQCEQTTRGDVCHQWGACGKSPEVDALQDLLVHCLRGLSQVALQAKSLGLATRETDEFTCEMLFSTLTNVNFSTSDFISFVNRAIALRESLKLQIQATGNAVIQSAINSFQPASDTQKQIQQGKDLEFEFISQSAKNVDIFSLKLTLLYGLKGVAAYAFHALELNQHDESLYIFFHEVLANLDAQDKSLQDWLDLTLKVGQMNLKAMELLDAGNTETFGHPTPTTVPLGHTVGKAILVSGHDLLALKAVLEQTSGTGIKVYTHGELLPAHGYPKLKQTHPHLYGHYGTAWQNQTHEFERFPGAIVMTTNCLMPPHETYKDKVFTLGPVGYPGLQHISIHDISLVIQKALELPGFTEDSEQKTVTTGFARNAVLGVADTVINAVKQGDIRHFFLVGGCDGAKPGRNYYSDLVEKIPNDCVVLTLGCGKFRFFDQNLGDIGGIPRLLDLGQCNDAYSAIQIAVALANTFEVNVNQLPLSMILSWYEQKAIAVLLTLLYLGIQNIRIGPTLPAFLTPNVVKLLSETFHLQLITTPEQDLAVCLG</sequence>
<feature type="chain" id="PRO_1000009142" description="Hydroxylamine reductase">
    <location>
        <begin position="1"/>
        <end position="544"/>
    </location>
</feature>
<feature type="binding site" evidence="1">
    <location>
        <position position="3"/>
    </location>
    <ligand>
        <name>[4Fe-4S] cluster</name>
        <dbReference type="ChEBI" id="CHEBI:49883"/>
    </ligand>
</feature>
<feature type="binding site" evidence="1">
    <location>
        <position position="6"/>
    </location>
    <ligand>
        <name>[4Fe-4S] cluster</name>
        <dbReference type="ChEBI" id="CHEBI:49883"/>
    </ligand>
</feature>
<feature type="binding site" evidence="1">
    <location>
        <position position="15"/>
    </location>
    <ligand>
        <name>[4Fe-4S] cluster</name>
        <dbReference type="ChEBI" id="CHEBI:49883"/>
    </ligand>
</feature>
<feature type="binding site" evidence="1">
    <location>
        <position position="21"/>
    </location>
    <ligand>
        <name>[4Fe-4S] cluster</name>
        <dbReference type="ChEBI" id="CHEBI:49883"/>
    </ligand>
</feature>
<feature type="binding site" evidence="1">
    <location>
        <position position="244"/>
    </location>
    <ligand>
        <name>hybrid [4Fe-2O-2S] cluster</name>
        <dbReference type="ChEBI" id="CHEBI:60519"/>
    </ligand>
</feature>
<feature type="binding site" evidence="1">
    <location>
        <position position="268"/>
    </location>
    <ligand>
        <name>hybrid [4Fe-2O-2S] cluster</name>
        <dbReference type="ChEBI" id="CHEBI:60519"/>
    </ligand>
</feature>
<feature type="binding site" evidence="1">
    <location>
        <position position="313"/>
    </location>
    <ligand>
        <name>hybrid [4Fe-2O-2S] cluster</name>
        <dbReference type="ChEBI" id="CHEBI:60519"/>
    </ligand>
</feature>
<feature type="binding site" description="via persulfide group" evidence="1">
    <location>
        <position position="400"/>
    </location>
    <ligand>
        <name>hybrid [4Fe-2O-2S] cluster</name>
        <dbReference type="ChEBI" id="CHEBI:60519"/>
    </ligand>
</feature>
<feature type="binding site" evidence="1">
    <location>
        <position position="428"/>
    </location>
    <ligand>
        <name>hybrid [4Fe-2O-2S] cluster</name>
        <dbReference type="ChEBI" id="CHEBI:60519"/>
    </ligand>
</feature>
<feature type="binding site" evidence="1">
    <location>
        <position position="453"/>
    </location>
    <ligand>
        <name>hybrid [4Fe-2O-2S] cluster</name>
        <dbReference type="ChEBI" id="CHEBI:60519"/>
    </ligand>
</feature>
<feature type="binding site" evidence="1">
    <location>
        <position position="487"/>
    </location>
    <ligand>
        <name>hybrid [4Fe-2O-2S] cluster</name>
        <dbReference type="ChEBI" id="CHEBI:60519"/>
    </ligand>
</feature>
<feature type="binding site" evidence="1">
    <location>
        <position position="489"/>
    </location>
    <ligand>
        <name>hybrid [4Fe-2O-2S] cluster</name>
        <dbReference type="ChEBI" id="CHEBI:60519"/>
    </ligand>
</feature>
<feature type="modified residue" description="Cysteine persulfide" evidence="1">
    <location>
        <position position="400"/>
    </location>
</feature>
<keyword id="KW-0004">4Fe-4S</keyword>
<keyword id="KW-0963">Cytoplasm</keyword>
<keyword id="KW-0408">Iron</keyword>
<keyword id="KW-0411">Iron-sulfur</keyword>
<keyword id="KW-0479">Metal-binding</keyword>
<keyword id="KW-0560">Oxidoreductase</keyword>
<organism>
    <name type="scientific">Trichormus variabilis (strain ATCC 29413 / PCC 7937)</name>
    <name type="common">Anabaena variabilis</name>
    <dbReference type="NCBI Taxonomy" id="240292"/>
    <lineage>
        <taxon>Bacteria</taxon>
        <taxon>Bacillati</taxon>
        <taxon>Cyanobacteriota</taxon>
        <taxon>Cyanophyceae</taxon>
        <taxon>Nostocales</taxon>
        <taxon>Nostocaceae</taxon>
        <taxon>Trichormus</taxon>
    </lineage>
</organism>
<protein>
    <recommendedName>
        <fullName evidence="1">Hydroxylamine reductase</fullName>
        <ecNumber evidence="1">1.7.99.1</ecNumber>
    </recommendedName>
    <alternativeName>
        <fullName evidence="1">Hybrid-cluster protein</fullName>
        <shortName evidence="1">HCP</shortName>
    </alternativeName>
    <alternativeName>
        <fullName evidence="1">Prismane protein</fullName>
    </alternativeName>
</protein>
<evidence type="ECO:0000255" key="1">
    <source>
        <dbReference type="HAMAP-Rule" id="MF_00069"/>
    </source>
</evidence>
<comment type="function">
    <text evidence="1">Catalyzes the reduction of hydroxylamine to form NH(3) and H(2)O.</text>
</comment>
<comment type="catalytic activity">
    <reaction evidence="1">
        <text>A + NH4(+) + H2O = hydroxylamine + AH2 + H(+)</text>
        <dbReference type="Rhea" id="RHEA:22052"/>
        <dbReference type="ChEBI" id="CHEBI:13193"/>
        <dbReference type="ChEBI" id="CHEBI:15377"/>
        <dbReference type="ChEBI" id="CHEBI:15378"/>
        <dbReference type="ChEBI" id="CHEBI:15429"/>
        <dbReference type="ChEBI" id="CHEBI:17499"/>
        <dbReference type="ChEBI" id="CHEBI:28938"/>
        <dbReference type="EC" id="1.7.99.1"/>
    </reaction>
</comment>
<comment type="cofactor">
    <cofactor evidence="1">
        <name>[4Fe-4S] cluster</name>
        <dbReference type="ChEBI" id="CHEBI:49883"/>
    </cofactor>
    <text evidence="1">Binds 1 [4Fe-4S] cluster.</text>
</comment>
<comment type="cofactor">
    <cofactor evidence="1">
        <name>hybrid [4Fe-2O-2S] cluster</name>
        <dbReference type="ChEBI" id="CHEBI:60519"/>
    </cofactor>
    <text evidence="1">Binds 1 hybrid [4Fe-2O-2S] cluster.</text>
</comment>
<comment type="subcellular location">
    <subcellularLocation>
        <location evidence="1">Cytoplasm</location>
    </subcellularLocation>
</comment>
<comment type="similarity">
    <text evidence="1">Belongs to the HCP family.</text>
</comment>
<accession>Q3M890</accession>
<proteinExistence type="inferred from homology"/>
<dbReference type="EC" id="1.7.99.1" evidence="1"/>
<dbReference type="EMBL" id="CP000117">
    <property type="protein sequence ID" value="ABA22796.1"/>
    <property type="molecule type" value="Genomic_DNA"/>
</dbReference>
<dbReference type="SMR" id="Q3M890"/>
<dbReference type="STRING" id="240292.Ava_3188"/>
<dbReference type="KEGG" id="ava:Ava_3188"/>
<dbReference type="eggNOG" id="COG1151">
    <property type="taxonomic scope" value="Bacteria"/>
</dbReference>
<dbReference type="HOGENOM" id="CLU_038344_2_0_3"/>
<dbReference type="Proteomes" id="UP000002533">
    <property type="component" value="Chromosome"/>
</dbReference>
<dbReference type="GO" id="GO:0005737">
    <property type="term" value="C:cytoplasm"/>
    <property type="evidence" value="ECO:0007669"/>
    <property type="project" value="UniProtKB-SubCell"/>
</dbReference>
<dbReference type="GO" id="GO:0051539">
    <property type="term" value="F:4 iron, 4 sulfur cluster binding"/>
    <property type="evidence" value="ECO:0007669"/>
    <property type="project" value="UniProtKB-KW"/>
</dbReference>
<dbReference type="GO" id="GO:0050418">
    <property type="term" value="F:hydroxylamine reductase activity"/>
    <property type="evidence" value="ECO:0007669"/>
    <property type="project" value="UniProtKB-UniRule"/>
</dbReference>
<dbReference type="GO" id="GO:0046872">
    <property type="term" value="F:metal ion binding"/>
    <property type="evidence" value="ECO:0007669"/>
    <property type="project" value="UniProtKB-KW"/>
</dbReference>
<dbReference type="GO" id="GO:0004601">
    <property type="term" value="F:peroxidase activity"/>
    <property type="evidence" value="ECO:0007669"/>
    <property type="project" value="TreeGrafter"/>
</dbReference>
<dbReference type="GO" id="GO:0042542">
    <property type="term" value="P:response to hydrogen peroxide"/>
    <property type="evidence" value="ECO:0007669"/>
    <property type="project" value="TreeGrafter"/>
</dbReference>
<dbReference type="CDD" id="cd01914">
    <property type="entry name" value="HCP"/>
    <property type="match status" value="1"/>
</dbReference>
<dbReference type="FunFam" id="1.20.1270.20:FF:000001">
    <property type="entry name" value="Hydroxylamine reductase"/>
    <property type="match status" value="1"/>
</dbReference>
<dbReference type="FunFam" id="3.40.50.2030:FF:000001">
    <property type="entry name" value="Hydroxylamine reductase"/>
    <property type="match status" value="1"/>
</dbReference>
<dbReference type="Gene3D" id="1.20.1270.20">
    <property type="match status" value="2"/>
</dbReference>
<dbReference type="Gene3D" id="3.40.50.2030">
    <property type="match status" value="2"/>
</dbReference>
<dbReference type="HAMAP" id="MF_00069">
    <property type="entry name" value="Hydroxylam_reduct"/>
    <property type="match status" value="1"/>
</dbReference>
<dbReference type="InterPro" id="IPR004137">
    <property type="entry name" value="HCP/CODH"/>
</dbReference>
<dbReference type="InterPro" id="IPR010048">
    <property type="entry name" value="Hydroxylam_reduct"/>
</dbReference>
<dbReference type="InterPro" id="IPR016099">
    <property type="entry name" value="Prismane-like_a/b-sand"/>
</dbReference>
<dbReference type="InterPro" id="IPR011254">
    <property type="entry name" value="Prismane-like_sf"/>
</dbReference>
<dbReference type="InterPro" id="IPR016100">
    <property type="entry name" value="Prismane_a-bundle"/>
</dbReference>
<dbReference type="NCBIfam" id="TIGR01703">
    <property type="entry name" value="hybrid_clust"/>
    <property type="match status" value="1"/>
</dbReference>
<dbReference type="NCBIfam" id="NF003658">
    <property type="entry name" value="PRK05290.1"/>
    <property type="match status" value="1"/>
</dbReference>
<dbReference type="PANTHER" id="PTHR30109">
    <property type="entry name" value="HYDROXYLAMINE REDUCTASE"/>
    <property type="match status" value="1"/>
</dbReference>
<dbReference type="PANTHER" id="PTHR30109:SF0">
    <property type="entry name" value="HYDROXYLAMINE REDUCTASE"/>
    <property type="match status" value="1"/>
</dbReference>
<dbReference type="Pfam" id="PF03063">
    <property type="entry name" value="Prismane"/>
    <property type="match status" value="1"/>
</dbReference>
<dbReference type="PIRSF" id="PIRSF000076">
    <property type="entry name" value="HCP"/>
    <property type="match status" value="1"/>
</dbReference>
<dbReference type="SUPFAM" id="SSF56821">
    <property type="entry name" value="Prismane protein-like"/>
    <property type="match status" value="1"/>
</dbReference>
<reference key="1">
    <citation type="journal article" date="2014" name="Stand. Genomic Sci.">
        <title>Complete genome sequence of Anabaena variabilis ATCC 29413.</title>
        <authorList>
            <person name="Thiel T."/>
            <person name="Pratte B.S."/>
            <person name="Zhong J."/>
            <person name="Goodwin L."/>
            <person name="Copeland A."/>
            <person name="Lucas S."/>
            <person name="Han C."/>
            <person name="Pitluck S."/>
            <person name="Land M.L."/>
            <person name="Kyrpides N.C."/>
            <person name="Woyke T."/>
        </authorList>
    </citation>
    <scope>NUCLEOTIDE SEQUENCE [LARGE SCALE GENOMIC DNA]</scope>
    <source>
        <strain>ATCC 29413 / PCC 7937</strain>
    </source>
</reference>
<name>HCP_TRIV2</name>
<gene>
    <name evidence="1" type="primary">hcp</name>
    <name type="ordered locus">Ava_3188</name>
</gene>